<organism>
    <name type="scientific">Staphylococcus aureus (strain Mu50 / ATCC 700699)</name>
    <dbReference type="NCBI Taxonomy" id="158878"/>
    <lineage>
        <taxon>Bacteria</taxon>
        <taxon>Bacillati</taxon>
        <taxon>Bacillota</taxon>
        <taxon>Bacilli</taxon>
        <taxon>Bacillales</taxon>
        <taxon>Staphylococcaceae</taxon>
        <taxon>Staphylococcus</taxon>
    </lineage>
</organism>
<name>DABA_STAAM</name>
<reference key="1">
    <citation type="journal article" date="2001" name="Lancet">
        <title>Whole genome sequencing of meticillin-resistant Staphylococcus aureus.</title>
        <authorList>
            <person name="Kuroda M."/>
            <person name="Ohta T."/>
            <person name="Uchiyama I."/>
            <person name="Baba T."/>
            <person name="Yuzawa H."/>
            <person name="Kobayashi I."/>
            <person name="Cui L."/>
            <person name="Oguchi A."/>
            <person name="Aoki K."/>
            <person name="Nagai Y."/>
            <person name="Lian J.-Q."/>
            <person name="Ito T."/>
            <person name="Kanamori M."/>
            <person name="Matsumaru H."/>
            <person name="Maruyama A."/>
            <person name="Murakami H."/>
            <person name="Hosoyama A."/>
            <person name="Mizutani-Ui Y."/>
            <person name="Takahashi N.K."/>
            <person name="Sawano T."/>
            <person name="Inoue R."/>
            <person name="Kaito C."/>
            <person name="Sekimizu K."/>
            <person name="Hirakawa H."/>
            <person name="Kuhara S."/>
            <person name="Goto S."/>
            <person name="Yabuzaki J."/>
            <person name="Kanehisa M."/>
            <person name="Yamashita A."/>
            <person name="Oshima K."/>
            <person name="Furuya K."/>
            <person name="Yoshino C."/>
            <person name="Shiba T."/>
            <person name="Hattori M."/>
            <person name="Ogasawara N."/>
            <person name="Hayashi H."/>
            <person name="Hiramatsu K."/>
        </authorList>
    </citation>
    <scope>NUCLEOTIDE SEQUENCE [LARGE SCALE GENOMIC DNA]</scope>
    <source>
        <strain>Mu50 / ATCC 700699</strain>
    </source>
</reference>
<proteinExistence type="inferred from homology"/>
<accession>Q99WE9</accession>
<feature type="chain" id="PRO_0000387309" description="Probable inorganic carbon transporter subunit DabA">
    <location>
        <begin position="1"/>
        <end position="901"/>
    </location>
</feature>
<feature type="binding site" evidence="1">
    <location>
        <position position="424"/>
    </location>
    <ligand>
        <name>Zn(2+)</name>
        <dbReference type="ChEBI" id="CHEBI:29105"/>
    </ligand>
</feature>
<feature type="binding site" evidence="1">
    <location>
        <position position="426"/>
    </location>
    <ligand>
        <name>Zn(2+)</name>
        <dbReference type="ChEBI" id="CHEBI:29105"/>
    </ligand>
</feature>
<feature type="binding site" evidence="1">
    <location>
        <position position="606"/>
    </location>
    <ligand>
        <name>Zn(2+)</name>
        <dbReference type="ChEBI" id="CHEBI:29105"/>
    </ligand>
</feature>
<feature type="binding site" evidence="1">
    <location>
        <position position="621"/>
    </location>
    <ligand>
        <name>Zn(2+)</name>
        <dbReference type="ChEBI" id="CHEBI:29105"/>
    </ligand>
</feature>
<keyword id="KW-1003">Cell membrane</keyword>
<keyword id="KW-0472">Membrane</keyword>
<keyword id="KW-0479">Metal-binding</keyword>
<keyword id="KW-0813">Transport</keyword>
<keyword id="KW-0862">Zinc</keyword>
<evidence type="ECO:0000255" key="1">
    <source>
        <dbReference type="HAMAP-Rule" id="MF_01871"/>
    </source>
</evidence>
<comment type="function">
    <text evidence="1">Part of an energy-coupled inorganic carbon pump.</text>
</comment>
<comment type="cofactor">
    <cofactor evidence="1">
        <name>Zn(2+)</name>
        <dbReference type="ChEBI" id="CHEBI:29105"/>
    </cofactor>
</comment>
<comment type="subunit">
    <text evidence="1">Forms a complex with DabB.</text>
</comment>
<comment type="subcellular location">
    <subcellularLocation>
        <location evidence="1">Cell membrane</location>
        <topology evidence="1">Peripheral membrane protein</topology>
    </subcellularLocation>
</comment>
<comment type="similarity">
    <text evidence="1">Belongs to the inorganic carbon transporter (TC 9.A.2) DabA family.</text>
</comment>
<dbReference type="EMBL" id="BA000017">
    <property type="protein sequence ID" value="BAB56615.1"/>
    <property type="molecule type" value="Genomic_DNA"/>
</dbReference>
<dbReference type="RefSeq" id="WP_000211545.1">
    <property type="nucleotide sequence ID" value="NC_002758.2"/>
</dbReference>
<dbReference type="KEGG" id="sav:SAV0453"/>
<dbReference type="HOGENOM" id="CLU_009885_0_0_9"/>
<dbReference type="PhylomeDB" id="Q99WE9"/>
<dbReference type="Proteomes" id="UP000002481">
    <property type="component" value="Chromosome"/>
</dbReference>
<dbReference type="GO" id="GO:0005886">
    <property type="term" value="C:plasma membrane"/>
    <property type="evidence" value="ECO:0007669"/>
    <property type="project" value="UniProtKB-SubCell"/>
</dbReference>
<dbReference type="GO" id="GO:0008270">
    <property type="term" value="F:zinc ion binding"/>
    <property type="evidence" value="ECO:0007669"/>
    <property type="project" value="UniProtKB-UniRule"/>
</dbReference>
<dbReference type="HAMAP" id="MF_01871">
    <property type="entry name" value="DabA"/>
    <property type="match status" value="1"/>
</dbReference>
<dbReference type="InterPro" id="IPR018752">
    <property type="entry name" value="DabA"/>
</dbReference>
<dbReference type="PANTHER" id="PTHR38344:SF1">
    <property type="entry name" value="INORGANIC CARBON TRANSPORTER SUBUNIT DABA-RELATED"/>
    <property type="match status" value="1"/>
</dbReference>
<dbReference type="PANTHER" id="PTHR38344">
    <property type="entry name" value="UPF0753 PROTEIN AQ_863"/>
    <property type="match status" value="1"/>
</dbReference>
<dbReference type="Pfam" id="PF10070">
    <property type="entry name" value="DabA"/>
    <property type="match status" value="1"/>
</dbReference>
<protein>
    <recommendedName>
        <fullName evidence="1">Probable inorganic carbon transporter subunit DabA</fullName>
    </recommendedName>
</protein>
<gene>
    <name evidence="1" type="primary">dabA</name>
    <name type="ordered locus">SAV0453</name>
</gene>
<sequence length="901" mass="102576">MTTQLNINSVIENAKRVITPLSPISIFAARNPWEGLEADTFEDVAKWLRDVRDVDIFPNKALIESAVARGELDESVFNQLVTDMLLEHHYNIPQHYINLYIDNIKTLKDVPASYMNHSNVDVVADLLLEKSKRDMAESYHHYDVRPMSDAIIDEQGEPLSEQVNRQMIKWTKLYIDQFLSSWTMPKREQSFYHAWLHLAQHDHSFTKAQRQVIKGLPNDPEMTIESVLTYFSIDQEDYQAYVEGHLLALPGWAGMLYYRSQQHHFEQHLLTDYLAIRLVVEQLLVGDEFKSVTKDCESRSENWFKQTVASLCYYSDMPSDVLLQHDVNEIQTFIHFAATMNKNVFKNLWLIAWEMTYESQLKQKIKAGHESVAGALDVNQVNVSENDNANQPHSVLLNDTQAVDENNSELNQVGTSTKAQIAFCIDVRSEPFRRHIEAAGPFETIGIAGFFGLPIQKDAVDEQFKHDSLPVMVPPAYRIKEFADRYDMNVYRQQQQTMSSMFYTFKLMKNNVMPSLLLPELSGPFLSLSTIVNSIMPRKSRASLQKIKQKWLKKPETKLTIDREFDRTSDLPVGFTEQEQIDFALQALKLMDLTEAFAPFVVLAGHASHSHNNPHHASLECGACGGASSGFNAKLLAMICNRPNVRQGLKQSGVYIPETTVFAAAEHHTSTDTLAWVYVPDTLSALALDAYESLNDAMPMISEQANRERLDKLPTIGRVNHPVEEAQRFASDWSEVRPEWGLAKNASFIIGRRQLTKGIDLEGRTFLHNYDWRKDKDGKLLNTIISGPALVAQWINLQYYASTVAPHFYGSGNKATQTVTSGVGVMQGNASDLMYGLSWQSVMAADRTMYHSPIRLLVVIQAPDYVVARLFANNEHFARKVSNHWLRLMSVNEEGRFKSWI</sequence>